<protein>
    <recommendedName>
        <fullName>Putative ankyrin repeat protein L86</fullName>
    </recommendedName>
</protein>
<name>YL086_MIMIV</name>
<dbReference type="EMBL" id="AY653733">
    <property type="protein sequence ID" value="AAV50361.1"/>
    <property type="molecule type" value="Genomic_DNA"/>
</dbReference>
<dbReference type="SMR" id="Q5UPG0"/>
<dbReference type="KEGG" id="vg:9924684"/>
<dbReference type="OrthoDB" id="4969at10239"/>
<dbReference type="Proteomes" id="UP000001134">
    <property type="component" value="Genome"/>
</dbReference>
<dbReference type="Gene3D" id="1.25.40.20">
    <property type="entry name" value="Ankyrin repeat-containing domain"/>
    <property type="match status" value="4"/>
</dbReference>
<dbReference type="InterPro" id="IPR002110">
    <property type="entry name" value="Ankyrin_rpt"/>
</dbReference>
<dbReference type="InterPro" id="IPR036770">
    <property type="entry name" value="Ankyrin_rpt-contain_sf"/>
</dbReference>
<dbReference type="PANTHER" id="PTHR24134:SF9">
    <property type="entry name" value="ANKYRIN REPEAT AND SOCS BOX PROTEIN 8"/>
    <property type="match status" value="1"/>
</dbReference>
<dbReference type="PANTHER" id="PTHR24134">
    <property type="entry name" value="ANKYRIN REPEAT-CONTAINING PROTEIN DDB_G0279043"/>
    <property type="match status" value="1"/>
</dbReference>
<dbReference type="Pfam" id="PF00023">
    <property type="entry name" value="Ank"/>
    <property type="match status" value="2"/>
</dbReference>
<dbReference type="Pfam" id="PF12796">
    <property type="entry name" value="Ank_2"/>
    <property type="match status" value="3"/>
</dbReference>
<dbReference type="SMART" id="SM00248">
    <property type="entry name" value="ANK"/>
    <property type="match status" value="11"/>
</dbReference>
<dbReference type="SUPFAM" id="SSF48403">
    <property type="entry name" value="Ankyrin repeat"/>
    <property type="match status" value="1"/>
</dbReference>
<dbReference type="PROSITE" id="PS50297">
    <property type="entry name" value="ANK_REP_REGION"/>
    <property type="match status" value="1"/>
</dbReference>
<dbReference type="PROSITE" id="PS50088">
    <property type="entry name" value="ANK_REPEAT"/>
    <property type="match status" value="1"/>
</dbReference>
<gene>
    <name type="ordered locus">MIMI_L86</name>
</gene>
<organism>
    <name type="scientific">Acanthamoeba polyphaga mimivirus</name>
    <name type="common">APMV</name>
    <dbReference type="NCBI Taxonomy" id="212035"/>
    <lineage>
        <taxon>Viruses</taxon>
        <taxon>Varidnaviria</taxon>
        <taxon>Bamfordvirae</taxon>
        <taxon>Nucleocytoviricota</taxon>
        <taxon>Megaviricetes</taxon>
        <taxon>Imitervirales</taxon>
        <taxon>Mimiviridae</taxon>
        <taxon>Megamimivirinae</taxon>
        <taxon>Mimivirus</taxon>
        <taxon>Mimivirus bradfordmassiliense</taxon>
    </lineage>
</organism>
<feature type="chain" id="PRO_0000067148" description="Putative ankyrin repeat protein L86">
    <location>
        <begin position="1"/>
        <end position="576"/>
    </location>
</feature>
<feature type="repeat" description="ANK 1">
    <location>
        <begin position="68"/>
        <end position="101"/>
    </location>
</feature>
<feature type="repeat" description="ANK 2">
    <location>
        <begin position="118"/>
        <end position="147"/>
    </location>
</feature>
<feature type="repeat" description="ANK 3">
    <location>
        <begin position="159"/>
        <end position="188"/>
    </location>
</feature>
<feature type="repeat" description="ANK 4">
    <location>
        <begin position="192"/>
        <end position="223"/>
    </location>
</feature>
<feature type="repeat" description="ANK 5">
    <location>
        <begin position="227"/>
        <end position="260"/>
    </location>
</feature>
<feature type="repeat" description="ANK 6">
    <location>
        <begin position="264"/>
        <end position="300"/>
    </location>
</feature>
<feature type="repeat" description="ANK 7">
    <location>
        <begin position="304"/>
        <end position="337"/>
    </location>
</feature>
<feature type="repeat" description="ANK 8">
    <location>
        <begin position="341"/>
        <end position="373"/>
    </location>
</feature>
<feature type="repeat" description="ANK 9">
    <location>
        <begin position="377"/>
        <end position="408"/>
    </location>
</feature>
<feature type="repeat" description="ANK 10">
    <location>
        <begin position="412"/>
        <end position="446"/>
    </location>
</feature>
<feature type="repeat" description="ANK 11">
    <location>
        <begin position="448"/>
        <end position="480"/>
    </location>
</feature>
<keyword id="KW-0040">ANK repeat</keyword>
<keyword id="KW-1185">Reference proteome</keyword>
<keyword id="KW-0677">Repeat</keyword>
<proteinExistence type="predicted"/>
<organismHost>
    <name type="scientific">Acanthamoeba polyphaga</name>
    <name type="common">Amoeba</name>
    <dbReference type="NCBI Taxonomy" id="5757"/>
</organismHost>
<sequence>MSEKNSFNPEGFSYYDCNRIFPYCHNGKCKNFSKLMYLIIKERIYNGHSIIIDHLNQNKNEINHQNEHGWTALMIASVTSSYWCTIDTVKLLLENGADPNIPNYKGETALGLVVGSLTRINCLEINQRTNFLKTAQLLIEYGANVNFQNDFGDSILNHSGGFILNSSLQYNNFDIIKILLDNNTNPNISNNKGNTLLHNICIYNQSCDDIIKLLLNYNVDLNSINLKRKTVLMYLCKFYNKTNNVNSIKLLLKNGANPNIQNTKGNTAMMYLFNKFYHEYGDNKYNIIKLLLQYGANPNIKNNSGISVLLRASTIQNGWERKNIIKFLLKHGADPNITNNQGLTFLMLLVKNPQNHMTKEFLNFVLKYVDPNIKCNKGKNILHYIPSESIDSPDILKRLLEFTTNPNARDYKGRTPLMLACKKFTSTNDIVKINLLVEYSVISLTDNNGKKALDYAMNNTSNIRLFMVSILLEKGDTFDVNIKNDPLSKCLNFVKQSSIAKQKYDIMLSKINIEANKFILRPSSIRTKILTVNWYIEHHNFEKLALCDYSQLMEYLGATDIDDLKLRIMENINYMD</sequence>
<accession>Q5UPG0</accession>
<reference key="1">
    <citation type="journal article" date="2004" name="Science">
        <title>The 1.2-megabase genome sequence of Mimivirus.</title>
        <authorList>
            <person name="Raoult D."/>
            <person name="Audic S."/>
            <person name="Robert C."/>
            <person name="Abergel C."/>
            <person name="Renesto P."/>
            <person name="Ogata H."/>
            <person name="La Scola B."/>
            <person name="Susan M."/>
            <person name="Claverie J.-M."/>
        </authorList>
    </citation>
    <scope>NUCLEOTIDE SEQUENCE [LARGE SCALE GENOMIC DNA]</scope>
    <source>
        <strain>Rowbotham-Bradford</strain>
    </source>
</reference>